<evidence type="ECO:0000250" key="1"/>
<evidence type="ECO:0000256" key="2">
    <source>
        <dbReference type="SAM" id="MobiDB-lite"/>
    </source>
</evidence>
<evidence type="ECO:0000305" key="3"/>
<evidence type="ECO:0007829" key="4">
    <source>
        <dbReference type="PDB" id="1HUE"/>
    </source>
</evidence>
<evidence type="ECO:0007829" key="5">
    <source>
        <dbReference type="PDB" id="1HUU"/>
    </source>
</evidence>
<comment type="function">
    <text>Histone-like DNA-binding protein which is capable of wrapping DNA to stabilize it, and thus to prevent its denaturation under extreme environmental conditions.</text>
</comment>
<comment type="subunit">
    <text>Homodimer.</text>
</comment>
<comment type="similarity">
    <text evidence="3">Belongs to the bacterial histone-like protein family.</text>
</comment>
<reference key="1">
    <citation type="journal article" date="1992" name="Gene">
        <title>The DNA-binding protein HU from mesophilic and thermophilic bacilli: gene cloning, overproduction and purification.</title>
        <authorList>
            <person name="Padas P.M."/>
            <person name="Wilson K.S."/>
            <person name="Vorgias C.E."/>
        </authorList>
    </citation>
    <scope>NUCLEOTIDE SEQUENCE [GENOMIC DNA]</scope>
</reference>
<reference key="2">
    <citation type="journal article" date="1995" name="Biosci. Biotechnol. Biochem.">
        <title>Cloning of the gene encoding DNA binding protein HU from Bacillus stearothermophilus and its expression in Escherichia coli.</title>
        <authorList>
            <person name="Kawamura S."/>
            <person name="Kajiyama H."/>
            <person name="Yamasaki N."/>
            <person name="Kimura M."/>
        </authorList>
    </citation>
    <scope>NUCLEOTIDE SEQUENCE [GENOMIC DNA]</scope>
    <source>
        <strain>1503</strain>
    </source>
</reference>
<reference key="3">
    <citation type="journal article" date="1983" name="J. Biol. Chem.">
        <title>On the DNA binding protein II from Bacillus stearothermophilus. II. The amino acid sequence and its relation to those of homologous proteins from other prokaryotes.</title>
        <authorList>
            <person name="Kimura M."/>
            <person name="Wilson K.S."/>
        </authorList>
    </citation>
    <scope>PROTEIN SEQUENCE</scope>
</reference>
<reference key="4">
    <citation type="journal article" date="1984" name="Nature">
        <title>3-A resolution structure of a protein with histone-like properties in prokaryotes.</title>
        <authorList>
            <person name="Tanaka I."/>
            <person name="Appelt K."/>
            <person name="Dijk J."/>
            <person name="White S.W."/>
            <person name="Wilson K.S."/>
        </authorList>
    </citation>
    <scope>X-RAY CRYSTALLOGRAPHY (3 ANGSTROMS)</scope>
</reference>
<reference key="5">
    <citation type="journal article" date="1995" name="J. Mol. Biol.">
        <title>Solution structure of the HU protein from Bacillus stearothermophilus.</title>
        <authorList>
            <person name="Vis H."/>
            <person name="Mariani M."/>
            <person name="Vorgias C.E."/>
            <person name="Wilson K.S."/>
            <person name="Kaptein R."/>
            <person name="Boelens R."/>
        </authorList>
    </citation>
    <scope>STRUCTURE BY NMR</scope>
</reference>
<gene>
    <name type="primary">hup</name>
    <name type="synonym">hbs</name>
    <name type="synonym">hbsU</name>
</gene>
<feature type="chain" id="PRO_0000104912" description="DNA-binding protein HU">
    <location>
        <begin position="1"/>
        <end position="90"/>
    </location>
</feature>
<feature type="region of interest" description="Disordered" evidence="2">
    <location>
        <begin position="56"/>
        <end position="90"/>
    </location>
</feature>
<feature type="modified residue" description="Phosphothreonine" evidence="1">
    <location>
        <position position="4"/>
    </location>
</feature>
<feature type="helix" evidence="5">
    <location>
        <begin position="3"/>
        <end position="14"/>
    </location>
</feature>
<feature type="helix" evidence="5">
    <location>
        <begin position="18"/>
        <end position="37"/>
    </location>
</feature>
<feature type="strand" evidence="5">
    <location>
        <begin position="42"/>
        <end position="44"/>
    </location>
</feature>
<feature type="turn" evidence="5">
    <location>
        <begin position="45"/>
        <end position="47"/>
    </location>
</feature>
<feature type="strand" evidence="5">
    <location>
        <begin position="48"/>
        <end position="55"/>
    </location>
</feature>
<feature type="strand" evidence="4">
    <location>
        <begin position="59"/>
        <end position="61"/>
    </location>
</feature>
<feature type="strand" evidence="4">
    <location>
        <begin position="63"/>
        <end position="70"/>
    </location>
</feature>
<feature type="strand" evidence="5">
    <location>
        <begin position="74"/>
        <end position="81"/>
    </location>
</feature>
<feature type="helix" evidence="5">
    <location>
        <begin position="83"/>
        <end position="89"/>
    </location>
</feature>
<name>DBH_GEOSE</name>
<keyword id="KW-0002">3D-structure</keyword>
<keyword id="KW-0903">Direct protein sequencing</keyword>
<keyword id="KW-0226">DNA condensation</keyword>
<keyword id="KW-0238">DNA-binding</keyword>
<keyword id="KW-0597">Phosphoprotein</keyword>
<sequence length="90" mass="9716">MNKTELINAVAETSGLSKKDATKAVDAVFDSITEALRKGDKVQLIGFGNFEVRERAARKGRNPQTGEEMEIPASKVPAFKPGKALKDAVK</sequence>
<organism>
    <name type="scientific">Geobacillus stearothermophilus</name>
    <name type="common">Bacillus stearothermophilus</name>
    <dbReference type="NCBI Taxonomy" id="1422"/>
    <lineage>
        <taxon>Bacteria</taxon>
        <taxon>Bacillati</taxon>
        <taxon>Bacillota</taxon>
        <taxon>Bacilli</taxon>
        <taxon>Bacillales</taxon>
        <taxon>Anoxybacillaceae</taxon>
        <taxon>Geobacillus</taxon>
    </lineage>
</organism>
<dbReference type="EMBL" id="M73500">
    <property type="protein sequence ID" value="AAA22532.1"/>
    <property type="molecule type" value="Genomic_DNA"/>
</dbReference>
<dbReference type="EMBL" id="D38080">
    <property type="protein sequence ID" value="BAA07273.1"/>
    <property type="molecule type" value="Genomic_DNA"/>
</dbReference>
<dbReference type="PIR" id="JC1205">
    <property type="entry name" value="DNBS2F"/>
</dbReference>
<dbReference type="PDB" id="1HUE">
    <property type="method" value="NMR"/>
    <property type="chains" value="A/B=1-90"/>
</dbReference>
<dbReference type="PDB" id="1HUU">
    <property type="method" value="X-ray"/>
    <property type="resolution" value="2.00 A"/>
    <property type="chains" value="A/B/C=1-90"/>
</dbReference>
<dbReference type="PDBsum" id="1HUE"/>
<dbReference type="PDBsum" id="1HUU"/>
<dbReference type="BMRB" id="P0A3H0"/>
<dbReference type="SMR" id="P0A3H0"/>
<dbReference type="OrthoDB" id="9799835at2"/>
<dbReference type="EvolutionaryTrace" id="P0A3H0"/>
<dbReference type="GO" id="GO:0005829">
    <property type="term" value="C:cytosol"/>
    <property type="evidence" value="ECO:0007669"/>
    <property type="project" value="TreeGrafter"/>
</dbReference>
<dbReference type="GO" id="GO:0003677">
    <property type="term" value="F:DNA binding"/>
    <property type="evidence" value="ECO:0007669"/>
    <property type="project" value="UniProtKB-KW"/>
</dbReference>
<dbReference type="GO" id="GO:0030527">
    <property type="term" value="F:structural constituent of chromatin"/>
    <property type="evidence" value="ECO:0007669"/>
    <property type="project" value="InterPro"/>
</dbReference>
<dbReference type="GO" id="GO:0030261">
    <property type="term" value="P:chromosome condensation"/>
    <property type="evidence" value="ECO:0007669"/>
    <property type="project" value="UniProtKB-KW"/>
</dbReference>
<dbReference type="CDD" id="cd13831">
    <property type="entry name" value="HU"/>
    <property type="match status" value="1"/>
</dbReference>
<dbReference type="FunFam" id="4.10.520.10:FF:000001">
    <property type="entry name" value="DNA-binding protein HU"/>
    <property type="match status" value="1"/>
</dbReference>
<dbReference type="Gene3D" id="4.10.520.10">
    <property type="entry name" value="IHF-like DNA-binding proteins"/>
    <property type="match status" value="1"/>
</dbReference>
<dbReference type="InterPro" id="IPR000119">
    <property type="entry name" value="Hist_DNA-bd"/>
</dbReference>
<dbReference type="InterPro" id="IPR020816">
    <property type="entry name" value="Histone-like_DNA-bd_CS"/>
</dbReference>
<dbReference type="InterPro" id="IPR010992">
    <property type="entry name" value="IHF-like_DNA-bd_dom_sf"/>
</dbReference>
<dbReference type="PANTHER" id="PTHR33175">
    <property type="entry name" value="DNA-BINDING PROTEIN HU"/>
    <property type="match status" value="1"/>
</dbReference>
<dbReference type="PANTHER" id="PTHR33175:SF3">
    <property type="entry name" value="DNA-BINDING PROTEIN HU-BETA"/>
    <property type="match status" value="1"/>
</dbReference>
<dbReference type="Pfam" id="PF00216">
    <property type="entry name" value="Bac_DNA_binding"/>
    <property type="match status" value="1"/>
</dbReference>
<dbReference type="PRINTS" id="PR01727">
    <property type="entry name" value="DNABINDINGHU"/>
</dbReference>
<dbReference type="SMART" id="SM00411">
    <property type="entry name" value="BHL"/>
    <property type="match status" value="1"/>
</dbReference>
<dbReference type="SUPFAM" id="SSF47729">
    <property type="entry name" value="IHF-like DNA-binding proteins"/>
    <property type="match status" value="1"/>
</dbReference>
<dbReference type="PROSITE" id="PS00045">
    <property type="entry name" value="HISTONE_LIKE"/>
    <property type="match status" value="1"/>
</dbReference>
<accession>P0A3H0</accession>
<accession>P02346</accession>
<accession>P08822</accession>
<proteinExistence type="evidence at protein level"/>
<protein>
    <recommendedName>
        <fullName>DNA-binding protein HU</fullName>
    </recommendedName>
    <alternativeName>
        <fullName>DNA-binding protein II</fullName>
    </alternativeName>
    <alternativeName>
        <fullName>HB</fullName>
    </alternativeName>
</protein>